<feature type="chain" id="PRO_0000077292" description="Type II restriction enzyme BsuRI">
    <location>
        <begin position="1"/>
        <end position="576"/>
    </location>
</feature>
<protein>
    <recommendedName>
        <fullName evidence="1">Type II restriction enzyme BsuRI</fullName>
        <shortName>R.BsuRI</shortName>
        <ecNumber evidence="2">3.1.21.4</ecNumber>
    </recommendedName>
    <alternativeName>
        <fullName>Endonuclease BsuRI</fullName>
    </alternativeName>
    <alternativeName>
        <fullName>Type-2 restriction enzyme BsuRI</fullName>
    </alternativeName>
</protein>
<name>T2BR_BACIU</name>
<keyword id="KW-0255">Endonuclease</keyword>
<keyword id="KW-0378">Hydrolase</keyword>
<keyword id="KW-0460">Magnesium</keyword>
<keyword id="KW-0540">Nuclease</keyword>
<keyword id="KW-0680">Restriction system</keyword>
<dbReference type="EC" id="3.1.21.4" evidence="2"/>
<dbReference type="EMBL" id="X02988">
    <property type="protein sequence ID" value="CAA26730.1"/>
    <property type="molecule type" value="Genomic_DNA"/>
</dbReference>
<dbReference type="PIR" id="A23488">
    <property type="entry name" value="NDBSR1"/>
</dbReference>
<dbReference type="RefSeq" id="WP_172480934.1">
    <property type="nucleotide sequence ID" value="NZ_CAJNPT010000007.1"/>
</dbReference>
<dbReference type="REBASE" id="11067">
    <property type="entry name" value="V.BsuRIP"/>
</dbReference>
<dbReference type="REBASE" id="620">
    <property type="entry name" value="BsuRI"/>
</dbReference>
<dbReference type="PRO" id="PR:P06529"/>
<dbReference type="GO" id="GO:0009036">
    <property type="term" value="F:type II site-specific deoxyribonuclease activity"/>
    <property type="evidence" value="ECO:0007669"/>
    <property type="project" value="UniProtKB-EC"/>
</dbReference>
<dbReference type="GO" id="GO:0009307">
    <property type="term" value="P:DNA restriction-modification system"/>
    <property type="evidence" value="ECO:0007669"/>
    <property type="project" value="UniProtKB-KW"/>
</dbReference>
<comment type="function">
    <text evidence="1 2">A P subtype restriction enzyme that recognizes the double-stranded sequence 5'-GGCC-3' and cleaves after G-2.</text>
</comment>
<comment type="catalytic activity">
    <reaction evidence="2">
        <text>Endonucleolytic cleavage of DNA to give specific double-stranded fragments with terminal 5'-phosphates.</text>
        <dbReference type="EC" id="3.1.21.4"/>
    </reaction>
</comment>
<comment type="cofactor">
    <cofactor>
        <name>Mg(2+)</name>
        <dbReference type="ChEBI" id="CHEBI:18420"/>
    </cofactor>
</comment>
<comment type="subunit">
    <text>Monomer.</text>
</comment>
<proteinExistence type="predicted"/>
<evidence type="ECO:0000303" key="1">
    <source>
    </source>
</evidence>
<evidence type="ECO:0000305" key="2">
    <source>
    </source>
</evidence>
<accession>P06529</accession>
<sequence>MGKNSKAIGNNHVKSVYQALLQSLKSKSVNGFSKITIETISFIKNLYPEIDSVTSKFDNSRPDQSKDLTLYLKSGETISLNLFLIKKGRRIQPKNAGAKSFLEKYFLSAEMQKIFNKEFERYYLDYLKEVVEHKKGTHYITDKRELKRLVSSHFPKFTEEINLYRDKFLFNLRETCFTLLQQFYNEKNIGFTHAFNVFFMVNDTNIITSYGKDENDVKVEKFAPASPSLKDIELYKTGKSTVGIKFGEVGLTLRFKFESDPWKSIKLATGYHEFPKEKERVNVNLKTMRRMEKLLNKHEYAKTSNNSNAIGKCHEAWTYYYFLKAFPDVIQVDPKQCVELINTYFSSINQNTLKKLYSSTSTIVDAITEKLRQKYHDYIIESIELIPDAYIKDRLDTGDLQLVLKVNNNIIVENISLKALAKRNSKITTKNPGMGSILGPTYFNMGSMESVINEVKNKFTIGEFNHRKSLEILSYEFGMKLDSATQEQLRRGIHNLLGKAMIAITIYGEGISFCKEPSEIDGEVKVHVNVPSAIQNTLTWNNELESISLRAKFSKSQKHGWSSIKLTSECQLESRK</sequence>
<organism>
    <name type="scientific">Bacillus subtilis</name>
    <dbReference type="NCBI Taxonomy" id="1423"/>
    <lineage>
        <taxon>Bacteria</taxon>
        <taxon>Bacillati</taxon>
        <taxon>Bacillota</taxon>
        <taxon>Bacilli</taxon>
        <taxon>Bacillales</taxon>
        <taxon>Bacillaceae</taxon>
        <taxon>Bacillus</taxon>
    </lineage>
</organism>
<reference key="1">
    <citation type="journal article" date="1985" name="Nucleic Acids Res.">
        <title>Nucleotide sequence of the BsuRI restriction-modification system.</title>
        <authorList>
            <person name="Kiss A."/>
            <person name="Posfai G."/>
            <person name="Keller C.C."/>
            <person name="Venetianer P."/>
            <person name="Roberts R.J."/>
        </authorList>
    </citation>
    <scope>NUCLEOTIDE SEQUENCE [GENOMIC DNA]</scope>
    <scope>FUNCTION</scope>
    <source>
        <strain>R</strain>
    </source>
</reference>
<reference key="2">
    <citation type="journal article" date="2003" name="Nucleic Acids Res.">
        <title>A nomenclature for restriction enzymes, DNA methyltransferases, homing endonucleases and their genes.</title>
        <authorList>
            <person name="Roberts R.J."/>
            <person name="Belfort M."/>
            <person name="Bestor T."/>
            <person name="Bhagwat A.S."/>
            <person name="Bickle T.A."/>
            <person name="Bitinaite J."/>
            <person name="Blumenthal R.M."/>
            <person name="Degtyarev S.K."/>
            <person name="Dryden D.T."/>
            <person name="Dybvig K."/>
            <person name="Firman K."/>
            <person name="Gromova E.S."/>
            <person name="Gumport R.I."/>
            <person name="Halford S.E."/>
            <person name="Hattman S."/>
            <person name="Heitman J."/>
            <person name="Hornby D.P."/>
            <person name="Janulaitis A."/>
            <person name="Jeltsch A."/>
            <person name="Josephsen J."/>
            <person name="Kiss A."/>
            <person name="Klaenhammer T.R."/>
            <person name="Kobayashi I."/>
            <person name="Kong H."/>
            <person name="Krueger D.H."/>
            <person name="Lacks S."/>
            <person name="Marinus M.G."/>
            <person name="Miyahara M."/>
            <person name="Morgan R.D."/>
            <person name="Murray N.E."/>
            <person name="Nagaraja V."/>
            <person name="Piekarowicz A."/>
            <person name="Pingoud A."/>
            <person name="Raleigh E."/>
            <person name="Rao D.N."/>
            <person name="Reich N."/>
            <person name="Repin V.E."/>
            <person name="Selker E.U."/>
            <person name="Shaw P.C."/>
            <person name="Stein D.C."/>
            <person name="Stoddard B.L."/>
            <person name="Szybalski W."/>
            <person name="Trautner T.A."/>
            <person name="Van Etten J.L."/>
            <person name="Vitor J.M."/>
            <person name="Wilson G.G."/>
            <person name="Xu S.Y."/>
        </authorList>
    </citation>
    <scope>NOMENCLATURE</scope>
    <scope>SUBTYPE</scope>
</reference>
<gene>
    <name type="primary">hsdRR</name>
    <name type="synonym">hsrR</name>
</gene>